<reference key="1">
    <citation type="submission" date="2001-04" db="EMBL/GenBank/DDBJ databases">
        <title>Restricted expression of adenosine deaminase in rat leptomeninges and its role in the regulation of sleep.</title>
        <authorList>
            <person name="Okada T."/>
            <person name="Mochizuki T."/>
            <person name="Huag Z."/>
            <person name="Sugita Y."/>
            <person name="Urade Y."/>
            <person name="Hayaishi O."/>
        </authorList>
    </citation>
    <scope>NUCLEOTIDE SEQUENCE [MRNA]</scope>
    <source>
        <strain>Sprague-Dawley</strain>
        <tissue>Leptomeninges</tissue>
    </source>
</reference>
<reference key="2">
    <citation type="journal article" date="2004" name="Genome Res.">
        <title>The status, quality, and expansion of the NIH full-length cDNA project: the Mammalian Gene Collection (MGC).</title>
        <authorList>
            <consortium name="The MGC Project Team"/>
        </authorList>
    </citation>
    <scope>NUCLEOTIDE SEQUENCE [LARGE SCALE MRNA]</scope>
    <source>
        <tissue>Thymus</tissue>
    </source>
</reference>
<reference key="3">
    <citation type="journal article" date="1996" name="Neuroscience">
        <title>Adenosine deaminase in rodent median eminence: detection by antibody to the mouse enzyme and co-localization with adenosine deaminase-complexing protein (CD26).</title>
        <authorList>
            <person name="Nagy J.I."/>
            <person name="Yamamoto T."/>
            <person name="Uemura H."/>
            <person name="Schrader W.P."/>
        </authorList>
    </citation>
    <scope>SUBCELLULAR LOCATION</scope>
    <scope>TISSUE SPECIFICITY</scope>
</reference>
<reference key="4">
    <citation type="journal article" date="2010" name="Brain Res.">
        <title>AMP deaminase and adenosine deaminase activities in liver and brain regions in acute ammonia intoxication and subacute toxic hepatitis.</title>
        <authorList>
            <person name="Kaminsky Y."/>
            <person name="Kosenko E."/>
        </authorList>
    </citation>
    <scope>CATALYTIC ACTIVITY</scope>
    <scope>SUBCELLULAR LOCATION</scope>
    <scope>TISSUE SPECIFICITY</scope>
    <scope>FUNCTION</scope>
</reference>
<keyword id="KW-0007">Acetylation</keyword>
<keyword id="KW-0130">Cell adhesion</keyword>
<keyword id="KW-0965">Cell junction</keyword>
<keyword id="KW-1003">Cell membrane</keyword>
<keyword id="KW-0963">Cytoplasm</keyword>
<keyword id="KW-0968">Cytoplasmic vesicle</keyword>
<keyword id="KW-0378">Hydrolase</keyword>
<keyword id="KW-0458">Lysosome</keyword>
<keyword id="KW-0472">Membrane</keyword>
<keyword id="KW-0479">Metal-binding</keyword>
<keyword id="KW-0546">Nucleotide metabolism</keyword>
<keyword id="KW-1185">Reference proteome</keyword>
<keyword id="KW-0862">Zinc</keyword>
<organism>
    <name type="scientific">Rattus norvegicus</name>
    <name type="common">Rat</name>
    <dbReference type="NCBI Taxonomy" id="10116"/>
    <lineage>
        <taxon>Eukaryota</taxon>
        <taxon>Metazoa</taxon>
        <taxon>Chordata</taxon>
        <taxon>Craniata</taxon>
        <taxon>Vertebrata</taxon>
        <taxon>Euteleostomi</taxon>
        <taxon>Mammalia</taxon>
        <taxon>Eutheria</taxon>
        <taxon>Euarchontoglires</taxon>
        <taxon>Glires</taxon>
        <taxon>Rodentia</taxon>
        <taxon>Myomorpha</taxon>
        <taxon>Muroidea</taxon>
        <taxon>Muridae</taxon>
        <taxon>Murinae</taxon>
        <taxon>Rattus</taxon>
    </lineage>
</organism>
<comment type="function">
    <text evidence="2 3 4 5">Catalyzes the hydrolytic deamination of adenosine and 2-deoxyadenosine (PubMed:19900420). Plays an important role in purine metabolism and in adenosine homeostasis (By similarity). Modulates signaling by extracellular adenosine, and so contributes indirectly to cellular signaling events (By similarity). Acts as a positive regulator of T-cell coactivation, by binding DPP4 (By similarity). Its interaction with DPP4 regulates lymphocyte-epithelial cell adhesion (By similarity). Enhances dendritic cell immunogenicity by affecting dendritic cell costimulatory molecule expression and cytokines and chemokines secretion (By similarity). Enhances CD4+ T-cell differentiation and proliferation (By similarity). Acts as a positive modulator of adenosine receptors ADORA1 and ADORA2A, by enhancing their ligand affinity via conformational change (By similarity). Stimulates plasminogen activation (By similarity). Plays a role in male fertility (By similarity). Plays a protective role in early postimplantation embryonic development (By similarity) (PubMed:19900420). Also responsible for the deamination of cordycepin (3'-deoxyadenosine), a fungal natural product that shows antitumor, antibacterial, antifungal, antivirus, and immune regulation properties (By similarity).</text>
</comment>
<comment type="catalytic activity">
    <reaction evidence="5">
        <text>adenosine + H2O + H(+) = inosine + NH4(+)</text>
        <dbReference type="Rhea" id="RHEA:24408"/>
        <dbReference type="ChEBI" id="CHEBI:15377"/>
        <dbReference type="ChEBI" id="CHEBI:15378"/>
        <dbReference type="ChEBI" id="CHEBI:16335"/>
        <dbReference type="ChEBI" id="CHEBI:17596"/>
        <dbReference type="ChEBI" id="CHEBI:28938"/>
        <dbReference type="EC" id="3.5.4.4"/>
    </reaction>
    <physiologicalReaction direction="left-to-right" evidence="8">
        <dbReference type="Rhea" id="RHEA:24409"/>
    </physiologicalReaction>
</comment>
<comment type="catalytic activity">
    <reaction evidence="2">
        <text>2'-deoxyadenosine + H2O + H(+) = 2'-deoxyinosine + NH4(+)</text>
        <dbReference type="Rhea" id="RHEA:28190"/>
        <dbReference type="ChEBI" id="CHEBI:15377"/>
        <dbReference type="ChEBI" id="CHEBI:15378"/>
        <dbReference type="ChEBI" id="CHEBI:17256"/>
        <dbReference type="ChEBI" id="CHEBI:28938"/>
        <dbReference type="ChEBI" id="CHEBI:28997"/>
        <dbReference type="EC" id="3.5.4.4"/>
    </reaction>
    <physiologicalReaction direction="left-to-right" evidence="2">
        <dbReference type="Rhea" id="RHEA:28191"/>
    </physiologicalReaction>
</comment>
<comment type="catalytic activity">
    <reaction evidence="2">
        <text>cordycepin + H2O + H(+) = 3'-deoxyinosine + NH4(+)</text>
        <dbReference type="Rhea" id="RHEA:79047"/>
        <dbReference type="ChEBI" id="CHEBI:15377"/>
        <dbReference type="ChEBI" id="CHEBI:15378"/>
        <dbReference type="ChEBI" id="CHEBI:28938"/>
        <dbReference type="ChEBI" id="CHEBI:29014"/>
        <dbReference type="ChEBI" id="CHEBI:229694"/>
    </reaction>
    <physiologicalReaction direction="left-to-right" evidence="2">
        <dbReference type="Rhea" id="RHEA:79048"/>
    </physiologicalReaction>
</comment>
<comment type="cofactor">
    <cofactor evidence="2">
        <name>Zn(2+)</name>
        <dbReference type="ChEBI" id="CHEBI:29105"/>
    </cofactor>
    <text evidence="2">Binds 1 zinc ion per subunit.</text>
</comment>
<comment type="subunit">
    <text evidence="2">Interacts with DPP4 (via extracellular domain). Interacts with PLG (via Kringle 4 domain); the interaction stimulates PLG activation when in complex with DPP4.</text>
</comment>
<comment type="subcellular location">
    <subcellularLocation>
        <location evidence="2">Cell membrane</location>
        <topology evidence="1">Peripheral membrane protein</topology>
        <orientation evidence="1">Extracellular side</orientation>
    </subcellularLocation>
    <subcellularLocation>
        <location evidence="2">Cell junction</location>
    </subcellularLocation>
    <subcellularLocation>
        <location evidence="5 6">Cytoplasmic vesicle lumen</location>
    </subcellularLocation>
    <subcellularLocation>
        <location evidence="1">Cytoplasm</location>
    </subcellularLocation>
    <subcellularLocation>
        <location evidence="2">Lysosome</location>
    </subcellularLocation>
    <text evidence="2">Colocalized with DPP4 at the cell surface.</text>
</comment>
<comment type="tissue specificity">
    <text evidence="5 6">Detected in brain and liver (at protein level).</text>
</comment>
<comment type="similarity">
    <text evidence="7">Belongs to the metallo-dependent hydrolases superfamily. Adenosine and AMP deaminases family.</text>
</comment>
<gene>
    <name type="primary">Ada</name>
</gene>
<proteinExistence type="evidence at protein level"/>
<sequence>MAQTPAFNKPKVELHVHLDGAIKPETILYYGKKRGIDLPADTVEGLRNIIGMDKPLSLPDFLAKFDYYMPAIAGCREAIKRIAYEFVEMKAKEGVVYVEVRYSPHLLANSKVDPIPWNQAEGDLTPDEVVDLVNQGLQEGEQAFGIKVRSILCCMRHQPSWSPEVLELCKKYHQKTVVAMDLAGDETIEGSSLFPGHVEAYEGAVKDGIHRTVHAGEVGSAEVVREAVDILKTERVGHGYHTIEDEALYNRLLKENMHFEVCPWSSYLTGAWNPKTTHAVVRFKDDQANYSLNSDDPLIFKSTVDTDYQMVKKDMGFTEEEFKRLNINAAKSSFLPEDEKKELLERLYKEYQ</sequence>
<dbReference type="EC" id="3.5.4.4" evidence="5"/>
<dbReference type="EMBL" id="AB059655">
    <property type="protein sequence ID" value="BAB69691.1"/>
    <property type="molecule type" value="mRNA"/>
</dbReference>
<dbReference type="EMBL" id="BC088116">
    <property type="protein sequence ID" value="AAH88116.1"/>
    <property type="molecule type" value="mRNA"/>
</dbReference>
<dbReference type="RefSeq" id="NP_569083.1">
    <property type="nucleotide sequence ID" value="NM_130399.2"/>
</dbReference>
<dbReference type="SMR" id="Q920P6"/>
<dbReference type="FunCoup" id="Q920P6">
    <property type="interactions" value="561"/>
</dbReference>
<dbReference type="IntAct" id="Q920P6">
    <property type="interactions" value="1"/>
</dbReference>
<dbReference type="STRING" id="10116.ENSRNOP00000014151"/>
<dbReference type="ChEMBL" id="CHEMBL4630846"/>
<dbReference type="iPTMnet" id="Q920P6"/>
<dbReference type="PhosphoSitePlus" id="Q920P6"/>
<dbReference type="jPOST" id="Q920P6"/>
<dbReference type="PaxDb" id="10116-ENSRNOP00000014151"/>
<dbReference type="DNASU" id="24165"/>
<dbReference type="Ensembl" id="ENSRNOT00000014151.7">
    <property type="protein sequence ID" value="ENSRNOP00000014151.3"/>
    <property type="gene ID" value="ENSRNOG00000010265.7"/>
</dbReference>
<dbReference type="GeneID" id="24165"/>
<dbReference type="KEGG" id="rno:24165"/>
<dbReference type="UCSC" id="RGD:2031">
    <property type="organism name" value="rat"/>
</dbReference>
<dbReference type="AGR" id="RGD:2031"/>
<dbReference type="CTD" id="100"/>
<dbReference type="RGD" id="2031">
    <property type="gene designation" value="Ada"/>
</dbReference>
<dbReference type="eggNOG" id="KOG1097">
    <property type="taxonomic scope" value="Eukaryota"/>
</dbReference>
<dbReference type="GeneTree" id="ENSGT00950000183113"/>
<dbReference type="HOGENOM" id="CLU_039228_0_1_1"/>
<dbReference type="InParanoid" id="Q920P6"/>
<dbReference type="OrthoDB" id="53274at9989"/>
<dbReference type="PhylomeDB" id="Q920P6"/>
<dbReference type="TreeFam" id="TF314270"/>
<dbReference type="Reactome" id="R-RNO-74217">
    <property type="pathway name" value="Purine salvage"/>
</dbReference>
<dbReference type="Reactome" id="R-RNO-9755088">
    <property type="pathway name" value="Ribavirin ADME"/>
</dbReference>
<dbReference type="PRO" id="PR:Q920P6"/>
<dbReference type="Proteomes" id="UP000002494">
    <property type="component" value="Chromosome 3"/>
</dbReference>
<dbReference type="Bgee" id="ENSRNOG00000010265">
    <property type="expression patterns" value="Expressed in esophagus and 19 other cell types or tissues"/>
</dbReference>
<dbReference type="GO" id="GO:0070161">
    <property type="term" value="C:anchoring junction"/>
    <property type="evidence" value="ECO:0007669"/>
    <property type="project" value="UniProtKB-SubCell"/>
</dbReference>
<dbReference type="GO" id="GO:0009986">
    <property type="term" value="C:cell surface"/>
    <property type="evidence" value="ECO:0000266"/>
    <property type="project" value="RGD"/>
</dbReference>
<dbReference type="GO" id="GO:0005737">
    <property type="term" value="C:cytoplasm"/>
    <property type="evidence" value="ECO:0000266"/>
    <property type="project" value="RGD"/>
</dbReference>
<dbReference type="GO" id="GO:0060205">
    <property type="term" value="C:cytoplasmic vesicle lumen"/>
    <property type="evidence" value="ECO:0007669"/>
    <property type="project" value="UniProtKB-SubCell"/>
</dbReference>
<dbReference type="GO" id="GO:0005829">
    <property type="term" value="C:cytosol"/>
    <property type="evidence" value="ECO:0000266"/>
    <property type="project" value="RGD"/>
</dbReference>
<dbReference type="GO" id="GO:0032839">
    <property type="term" value="C:dendrite cytoplasm"/>
    <property type="evidence" value="ECO:0000314"/>
    <property type="project" value="RGD"/>
</dbReference>
<dbReference type="GO" id="GO:0009897">
    <property type="term" value="C:external side of plasma membrane"/>
    <property type="evidence" value="ECO:0000266"/>
    <property type="project" value="RGD"/>
</dbReference>
<dbReference type="GO" id="GO:0005615">
    <property type="term" value="C:extracellular space"/>
    <property type="evidence" value="ECO:0000314"/>
    <property type="project" value="RGD"/>
</dbReference>
<dbReference type="GO" id="GO:0005764">
    <property type="term" value="C:lysosome"/>
    <property type="evidence" value="ECO:0000266"/>
    <property type="project" value="RGD"/>
</dbReference>
<dbReference type="GO" id="GO:0016020">
    <property type="term" value="C:membrane"/>
    <property type="evidence" value="ECO:0000266"/>
    <property type="project" value="RGD"/>
</dbReference>
<dbReference type="GO" id="GO:0043025">
    <property type="term" value="C:neuronal cell body"/>
    <property type="evidence" value="ECO:0000314"/>
    <property type="project" value="RGD"/>
</dbReference>
<dbReference type="GO" id="GO:0046936">
    <property type="term" value="F:2'-deoxyadenosine deaminase activity"/>
    <property type="evidence" value="ECO:0000266"/>
    <property type="project" value="RGD"/>
</dbReference>
<dbReference type="GO" id="GO:0004000">
    <property type="term" value="F:adenosine deaminase activity"/>
    <property type="evidence" value="ECO:0000314"/>
    <property type="project" value="UniProtKB"/>
</dbReference>
<dbReference type="GO" id="GO:0019239">
    <property type="term" value="F:deaminase activity"/>
    <property type="evidence" value="ECO:0000266"/>
    <property type="project" value="RGD"/>
</dbReference>
<dbReference type="GO" id="GO:0001883">
    <property type="term" value="F:purine nucleoside binding"/>
    <property type="evidence" value="ECO:0000314"/>
    <property type="project" value="RGD"/>
</dbReference>
<dbReference type="GO" id="GO:0008270">
    <property type="term" value="F:zinc ion binding"/>
    <property type="evidence" value="ECO:0000250"/>
    <property type="project" value="UniProtKB"/>
</dbReference>
<dbReference type="GO" id="GO:0006154">
    <property type="term" value="P:adenosine catabolic process"/>
    <property type="evidence" value="ECO:0000315"/>
    <property type="project" value="RGD"/>
</dbReference>
<dbReference type="GO" id="GO:0046085">
    <property type="term" value="P:adenosine metabolic process"/>
    <property type="evidence" value="ECO:0000314"/>
    <property type="project" value="RGD"/>
</dbReference>
<dbReference type="GO" id="GO:0000255">
    <property type="term" value="P:allantoin metabolic process"/>
    <property type="evidence" value="ECO:0000266"/>
    <property type="project" value="RGD"/>
</dbReference>
<dbReference type="GO" id="GO:0046632">
    <property type="term" value="P:alpha-beta T cell differentiation"/>
    <property type="evidence" value="ECO:0000266"/>
    <property type="project" value="RGD"/>
</dbReference>
<dbReference type="GO" id="GO:0043605">
    <property type="term" value="P:amide catabolic process"/>
    <property type="evidence" value="ECO:0000266"/>
    <property type="project" value="RGD"/>
</dbReference>
<dbReference type="GO" id="GO:0006196">
    <property type="term" value="P:AMP catabolic process"/>
    <property type="evidence" value="ECO:0000266"/>
    <property type="project" value="RGD"/>
</dbReference>
<dbReference type="GO" id="GO:0044209">
    <property type="term" value="P:AMP salvage"/>
    <property type="evidence" value="ECO:0000266"/>
    <property type="project" value="RGD"/>
</dbReference>
<dbReference type="GO" id="GO:0006915">
    <property type="term" value="P:apoptotic process"/>
    <property type="evidence" value="ECO:0000266"/>
    <property type="project" value="RGD"/>
</dbReference>
<dbReference type="GO" id="GO:0042100">
    <property type="term" value="P:B cell proliferation"/>
    <property type="evidence" value="ECO:0000266"/>
    <property type="project" value="RGD"/>
</dbReference>
<dbReference type="GO" id="GO:0019722">
    <property type="term" value="P:calcium-mediated signaling"/>
    <property type="evidence" value="ECO:0000266"/>
    <property type="project" value="RGD"/>
</dbReference>
<dbReference type="GO" id="GO:0007155">
    <property type="term" value="P:cell adhesion"/>
    <property type="evidence" value="ECO:0007669"/>
    <property type="project" value="UniProtKB-KW"/>
</dbReference>
<dbReference type="GO" id="GO:0046059">
    <property type="term" value="P:dAMP catabolic process"/>
    <property type="evidence" value="ECO:0000266"/>
    <property type="project" value="RGD"/>
</dbReference>
<dbReference type="GO" id="GO:0046061">
    <property type="term" value="P:dATP catabolic process"/>
    <property type="evidence" value="ECO:0000266"/>
    <property type="project" value="RGD"/>
</dbReference>
<dbReference type="GO" id="GO:0006157">
    <property type="term" value="P:deoxyadenosine catabolic process"/>
    <property type="evidence" value="ECO:0000266"/>
    <property type="project" value="RGD"/>
</dbReference>
<dbReference type="GO" id="GO:0048566">
    <property type="term" value="P:embryonic digestive tract development"/>
    <property type="evidence" value="ECO:0000266"/>
    <property type="project" value="RGD"/>
</dbReference>
<dbReference type="GO" id="GO:0002314">
    <property type="term" value="P:germinal center B cell differentiation"/>
    <property type="evidence" value="ECO:0000266"/>
    <property type="project" value="RGD"/>
</dbReference>
<dbReference type="GO" id="GO:0002467">
    <property type="term" value="P:germinal center formation"/>
    <property type="evidence" value="ECO:0000266"/>
    <property type="project" value="RGD"/>
</dbReference>
<dbReference type="GO" id="GO:0032263">
    <property type="term" value="P:GMP salvage"/>
    <property type="evidence" value="ECO:0000266"/>
    <property type="project" value="RGD"/>
</dbReference>
<dbReference type="GO" id="GO:0001821">
    <property type="term" value="P:histamine secretion"/>
    <property type="evidence" value="ECO:0000315"/>
    <property type="project" value="RGD"/>
</dbReference>
<dbReference type="GO" id="GO:0046101">
    <property type="term" value="P:hypoxanthine biosynthetic process"/>
    <property type="evidence" value="ECO:0000266"/>
    <property type="project" value="RGD"/>
</dbReference>
<dbReference type="GO" id="GO:0043103">
    <property type="term" value="P:hypoxanthine salvage"/>
    <property type="evidence" value="ECO:0000318"/>
    <property type="project" value="GO_Central"/>
</dbReference>
<dbReference type="GO" id="GO:0001701">
    <property type="term" value="P:in utero embryonic development"/>
    <property type="evidence" value="ECO:0000266"/>
    <property type="project" value="RGD"/>
</dbReference>
<dbReference type="GO" id="GO:0046103">
    <property type="term" value="P:inosine biosynthetic process"/>
    <property type="evidence" value="ECO:0000250"/>
    <property type="project" value="UniProtKB"/>
</dbReference>
<dbReference type="GO" id="GO:0050900">
    <property type="term" value="P:leukocyte migration"/>
    <property type="evidence" value="ECO:0000266"/>
    <property type="project" value="RGD"/>
</dbReference>
<dbReference type="GO" id="GO:0001889">
    <property type="term" value="P:liver development"/>
    <property type="evidence" value="ECO:0000266"/>
    <property type="project" value="RGD"/>
</dbReference>
<dbReference type="GO" id="GO:0048286">
    <property type="term" value="P:lung alveolus development"/>
    <property type="evidence" value="ECO:0000266"/>
    <property type="project" value="RGD"/>
</dbReference>
<dbReference type="GO" id="GO:0030324">
    <property type="term" value="P:lung development"/>
    <property type="evidence" value="ECO:0000266"/>
    <property type="project" value="RGD"/>
</dbReference>
<dbReference type="GO" id="GO:0002901">
    <property type="term" value="P:mature B cell apoptotic process"/>
    <property type="evidence" value="ECO:0000266"/>
    <property type="project" value="RGD"/>
</dbReference>
<dbReference type="GO" id="GO:0070254">
    <property type="term" value="P:mucus secretion"/>
    <property type="evidence" value="ECO:0000266"/>
    <property type="project" value="RGD"/>
</dbReference>
<dbReference type="GO" id="GO:0060169">
    <property type="term" value="P:negative regulation of adenosine receptor signaling pathway"/>
    <property type="evidence" value="ECO:0000266"/>
    <property type="project" value="RGD"/>
</dbReference>
<dbReference type="GO" id="GO:0043066">
    <property type="term" value="P:negative regulation of apoptotic process"/>
    <property type="evidence" value="ECO:0000266"/>
    <property type="project" value="RGD"/>
</dbReference>
<dbReference type="GO" id="GO:0042323">
    <property type="term" value="P:negative regulation of circadian sleep/wake cycle, non-REM sleep"/>
    <property type="evidence" value="ECO:0000315"/>
    <property type="project" value="RGD"/>
</dbReference>
<dbReference type="GO" id="GO:0050728">
    <property type="term" value="P:negative regulation of inflammatory response"/>
    <property type="evidence" value="ECO:0000266"/>
    <property type="project" value="RGD"/>
</dbReference>
<dbReference type="GO" id="GO:0002686">
    <property type="term" value="P:negative regulation of leukocyte migration"/>
    <property type="evidence" value="ECO:0000266"/>
    <property type="project" value="RGD"/>
</dbReference>
<dbReference type="GO" id="GO:0002906">
    <property type="term" value="P:negative regulation of mature B cell apoptotic process"/>
    <property type="evidence" value="ECO:0000266"/>
    <property type="project" value="RGD"/>
</dbReference>
<dbReference type="GO" id="GO:0070256">
    <property type="term" value="P:negative regulation of mucus secretion"/>
    <property type="evidence" value="ECO:0000266"/>
    <property type="project" value="RGD"/>
</dbReference>
<dbReference type="GO" id="GO:0060407">
    <property type="term" value="P:negative regulation of penile erection"/>
    <property type="evidence" value="ECO:0000266"/>
    <property type="project" value="RGD"/>
</dbReference>
<dbReference type="GO" id="GO:0070244">
    <property type="term" value="P:negative regulation of thymocyte apoptotic process"/>
    <property type="evidence" value="ECO:0000266"/>
    <property type="project" value="RGD"/>
</dbReference>
<dbReference type="GO" id="GO:0043084">
    <property type="term" value="P:penile erection"/>
    <property type="evidence" value="ECO:0000266"/>
    <property type="project" value="RGD"/>
</dbReference>
<dbReference type="GO" id="GO:0048541">
    <property type="term" value="P:Peyer's patch development"/>
    <property type="evidence" value="ECO:0000266"/>
    <property type="project" value="RGD"/>
</dbReference>
<dbReference type="GO" id="GO:0001890">
    <property type="term" value="P:placenta development"/>
    <property type="evidence" value="ECO:0000266"/>
    <property type="project" value="RGD"/>
</dbReference>
<dbReference type="GO" id="GO:0046638">
    <property type="term" value="P:positive regulation of alpha-beta T cell differentiation"/>
    <property type="evidence" value="ECO:0000266"/>
    <property type="project" value="RGD"/>
</dbReference>
<dbReference type="GO" id="GO:0030890">
    <property type="term" value="P:positive regulation of B cell proliferation"/>
    <property type="evidence" value="ECO:0000266"/>
    <property type="project" value="RGD"/>
</dbReference>
<dbReference type="GO" id="GO:0050850">
    <property type="term" value="P:positive regulation of calcium-mediated signaling"/>
    <property type="evidence" value="ECO:0000266"/>
    <property type="project" value="RGD"/>
</dbReference>
<dbReference type="GO" id="GO:0002636">
    <property type="term" value="P:positive regulation of germinal center formation"/>
    <property type="evidence" value="ECO:0000266"/>
    <property type="project" value="RGD"/>
</dbReference>
<dbReference type="GO" id="GO:0010460">
    <property type="term" value="P:positive regulation of heart rate"/>
    <property type="evidence" value="ECO:0000266"/>
    <property type="project" value="RGD"/>
</dbReference>
<dbReference type="GO" id="GO:0045987">
    <property type="term" value="P:positive regulation of smooth muscle contraction"/>
    <property type="evidence" value="ECO:0000266"/>
    <property type="project" value="RGD"/>
</dbReference>
<dbReference type="GO" id="GO:0050870">
    <property type="term" value="P:positive regulation of T cell activation"/>
    <property type="evidence" value="ECO:0000266"/>
    <property type="project" value="RGD"/>
</dbReference>
<dbReference type="GO" id="GO:0045582">
    <property type="term" value="P:positive regulation of T cell differentiation"/>
    <property type="evidence" value="ECO:0000266"/>
    <property type="project" value="RGD"/>
</dbReference>
<dbReference type="GO" id="GO:0033089">
    <property type="term" value="P:positive regulation of T cell differentiation in thymus"/>
    <property type="evidence" value="ECO:0000266"/>
    <property type="project" value="RGD"/>
</dbReference>
<dbReference type="GO" id="GO:0050862">
    <property type="term" value="P:positive regulation of T cell receptor signaling pathway"/>
    <property type="evidence" value="ECO:0000266"/>
    <property type="project" value="RGD"/>
</dbReference>
<dbReference type="GO" id="GO:0032261">
    <property type="term" value="P:purine nucleotide salvage"/>
    <property type="evidence" value="ECO:0000266"/>
    <property type="project" value="RGD"/>
</dbReference>
<dbReference type="GO" id="GO:0033632">
    <property type="term" value="P:regulation of cell-cell adhesion mediated by integrin"/>
    <property type="evidence" value="ECO:0000266"/>
    <property type="project" value="RGD"/>
</dbReference>
<dbReference type="GO" id="GO:0045187">
    <property type="term" value="P:regulation of circadian sleep/wake cycle, sleep"/>
    <property type="evidence" value="ECO:0000270"/>
    <property type="project" value="RGD"/>
</dbReference>
<dbReference type="GO" id="GO:0045580">
    <property type="term" value="P:regulation of T cell differentiation"/>
    <property type="evidence" value="ECO:0000266"/>
    <property type="project" value="RGD"/>
</dbReference>
<dbReference type="GO" id="GO:0033081">
    <property type="term" value="P:regulation of T cell differentiation in thymus"/>
    <property type="evidence" value="ECO:0000315"/>
    <property type="project" value="RGD"/>
</dbReference>
<dbReference type="GO" id="GO:0046686">
    <property type="term" value="P:response to cadmium ion"/>
    <property type="evidence" value="ECO:0000270"/>
    <property type="project" value="RGD"/>
</dbReference>
<dbReference type="GO" id="GO:0042542">
    <property type="term" value="P:response to hydrogen peroxide"/>
    <property type="evidence" value="ECO:0000270"/>
    <property type="project" value="RGD"/>
</dbReference>
<dbReference type="GO" id="GO:0001666">
    <property type="term" value="P:response to hypoxia"/>
    <property type="evidence" value="ECO:0000315"/>
    <property type="project" value="RGD"/>
</dbReference>
<dbReference type="GO" id="GO:1903576">
    <property type="term" value="P:response to L-arginine"/>
    <property type="evidence" value="ECO:0000270"/>
    <property type="project" value="RGD"/>
</dbReference>
<dbReference type="GO" id="GO:0014074">
    <property type="term" value="P:response to purine-containing compound"/>
    <property type="evidence" value="ECO:0000266"/>
    <property type="project" value="RGD"/>
</dbReference>
<dbReference type="GO" id="GO:0033197">
    <property type="term" value="P:response to vitamin E"/>
    <property type="evidence" value="ECO:0000314"/>
    <property type="project" value="RGD"/>
</dbReference>
<dbReference type="GO" id="GO:0009410">
    <property type="term" value="P:response to xenobiotic stimulus"/>
    <property type="evidence" value="ECO:0000270"/>
    <property type="project" value="RGD"/>
</dbReference>
<dbReference type="GO" id="GO:0006939">
    <property type="term" value="P:smooth muscle contraction"/>
    <property type="evidence" value="ECO:0000266"/>
    <property type="project" value="RGD"/>
</dbReference>
<dbReference type="GO" id="GO:0042110">
    <property type="term" value="P:T cell activation"/>
    <property type="evidence" value="ECO:0000266"/>
    <property type="project" value="RGD"/>
</dbReference>
<dbReference type="GO" id="GO:0030217">
    <property type="term" value="P:T cell differentiation"/>
    <property type="evidence" value="ECO:0000266"/>
    <property type="project" value="RGD"/>
</dbReference>
<dbReference type="GO" id="GO:0033077">
    <property type="term" value="P:T cell differentiation in thymus"/>
    <property type="evidence" value="ECO:0000266"/>
    <property type="project" value="RGD"/>
</dbReference>
<dbReference type="GO" id="GO:0050852">
    <property type="term" value="P:T cell receptor signaling pathway"/>
    <property type="evidence" value="ECO:0000266"/>
    <property type="project" value="RGD"/>
</dbReference>
<dbReference type="GO" id="GO:0070242">
    <property type="term" value="P:thymocyte apoptotic process"/>
    <property type="evidence" value="ECO:0000266"/>
    <property type="project" value="RGD"/>
</dbReference>
<dbReference type="GO" id="GO:0001829">
    <property type="term" value="P:trophectodermal cell differentiation"/>
    <property type="evidence" value="ECO:0000266"/>
    <property type="project" value="RGD"/>
</dbReference>
<dbReference type="GO" id="GO:0046111">
    <property type="term" value="P:xanthine biosynthetic process"/>
    <property type="evidence" value="ECO:0000266"/>
    <property type="project" value="RGD"/>
</dbReference>
<dbReference type="CDD" id="cd01320">
    <property type="entry name" value="ADA"/>
    <property type="match status" value="1"/>
</dbReference>
<dbReference type="FunFam" id="3.20.20.140:FF:000038">
    <property type="entry name" value="Adenosine deaminase"/>
    <property type="match status" value="1"/>
</dbReference>
<dbReference type="Gene3D" id="3.20.20.140">
    <property type="entry name" value="Metal-dependent hydrolases"/>
    <property type="match status" value="1"/>
</dbReference>
<dbReference type="HAMAP" id="MF_00540">
    <property type="entry name" value="A_deaminase"/>
    <property type="match status" value="1"/>
</dbReference>
<dbReference type="InterPro" id="IPR006650">
    <property type="entry name" value="A/AMP_deam_AS"/>
</dbReference>
<dbReference type="InterPro" id="IPR028893">
    <property type="entry name" value="A_deaminase"/>
</dbReference>
<dbReference type="InterPro" id="IPR001365">
    <property type="entry name" value="A_deaminase_dom"/>
</dbReference>
<dbReference type="InterPro" id="IPR006330">
    <property type="entry name" value="Ado/ade_deaminase"/>
</dbReference>
<dbReference type="InterPro" id="IPR032466">
    <property type="entry name" value="Metal_Hydrolase"/>
</dbReference>
<dbReference type="NCBIfam" id="TIGR01430">
    <property type="entry name" value="aden_deam"/>
    <property type="match status" value="1"/>
</dbReference>
<dbReference type="PANTHER" id="PTHR11409">
    <property type="entry name" value="ADENOSINE DEAMINASE"/>
    <property type="match status" value="1"/>
</dbReference>
<dbReference type="PANTHER" id="PTHR11409:SF43">
    <property type="entry name" value="ADENOSINE DEAMINASE"/>
    <property type="match status" value="1"/>
</dbReference>
<dbReference type="Pfam" id="PF00962">
    <property type="entry name" value="A_deaminase"/>
    <property type="match status" value="1"/>
</dbReference>
<dbReference type="SUPFAM" id="SSF51556">
    <property type="entry name" value="Metallo-dependent hydrolases"/>
    <property type="match status" value="1"/>
</dbReference>
<dbReference type="PROSITE" id="PS00485">
    <property type="entry name" value="A_DEAMINASE"/>
    <property type="match status" value="1"/>
</dbReference>
<evidence type="ECO:0000250" key="1"/>
<evidence type="ECO:0000250" key="2">
    <source>
        <dbReference type="UniProtKB" id="P00813"/>
    </source>
</evidence>
<evidence type="ECO:0000250" key="3">
    <source>
        <dbReference type="UniProtKB" id="P03958"/>
    </source>
</evidence>
<evidence type="ECO:0000250" key="4">
    <source>
        <dbReference type="UniProtKB" id="P56658"/>
    </source>
</evidence>
<evidence type="ECO:0000269" key="5">
    <source>
    </source>
</evidence>
<evidence type="ECO:0000269" key="6">
    <source>
    </source>
</evidence>
<evidence type="ECO:0000305" key="7"/>
<evidence type="ECO:0000305" key="8">
    <source>
    </source>
</evidence>
<feature type="initiator methionine" description="Removed" evidence="2">
    <location>
        <position position="1"/>
    </location>
</feature>
<feature type="chain" id="PRO_0000194354" description="Adenosine deaminase">
    <location>
        <begin position="2"/>
        <end position="352"/>
    </location>
</feature>
<feature type="active site" description="Proton donor" evidence="3">
    <location>
        <position position="217"/>
    </location>
</feature>
<feature type="binding site" evidence="4">
    <location>
        <position position="15"/>
    </location>
    <ligand>
        <name>Zn(2+)</name>
        <dbReference type="ChEBI" id="CHEBI:29105"/>
        <note>catalytic</note>
    </ligand>
</feature>
<feature type="binding site" evidence="4">
    <location>
        <position position="17"/>
    </location>
    <ligand>
        <name>substrate</name>
    </ligand>
</feature>
<feature type="binding site" evidence="4">
    <location>
        <position position="17"/>
    </location>
    <ligand>
        <name>Zn(2+)</name>
        <dbReference type="ChEBI" id="CHEBI:29105"/>
        <note>catalytic</note>
    </ligand>
</feature>
<feature type="binding site" evidence="4">
    <location>
        <position position="19"/>
    </location>
    <ligand>
        <name>substrate</name>
    </ligand>
</feature>
<feature type="binding site" evidence="4">
    <location>
        <position position="184"/>
    </location>
    <ligand>
        <name>substrate</name>
    </ligand>
</feature>
<feature type="binding site" evidence="4">
    <location>
        <position position="214"/>
    </location>
    <ligand>
        <name>Zn(2+)</name>
        <dbReference type="ChEBI" id="CHEBI:29105"/>
        <note>catalytic</note>
    </ligand>
</feature>
<feature type="binding site" evidence="4">
    <location>
        <position position="295"/>
    </location>
    <ligand>
        <name>Zn(2+)</name>
        <dbReference type="ChEBI" id="CHEBI:29105"/>
        <note>catalytic</note>
    </ligand>
</feature>
<feature type="binding site" evidence="4">
    <location>
        <position position="296"/>
    </location>
    <ligand>
        <name>substrate</name>
    </ligand>
</feature>
<feature type="site" description="Important for interaction with adenosine receptors and increasing their affinity for agonists" evidence="2">
    <location>
        <position position="58"/>
    </location>
</feature>
<feature type="site" description="Important for interaction with adenosine receptors and increasing their affinity for agonists" evidence="2">
    <location>
        <position position="62"/>
    </location>
</feature>
<feature type="site" description="Important for catalytic activity" evidence="3">
    <location>
        <position position="238"/>
    </location>
</feature>
<feature type="modified residue" description="N-acetylalanine" evidence="2">
    <location>
        <position position="2"/>
    </location>
</feature>
<feature type="modified residue" description="N6-acetyllysine" evidence="2">
    <location>
        <position position="54"/>
    </location>
</feature>
<feature type="modified residue" description="N6-acetyllysine" evidence="2">
    <location>
        <position position="232"/>
    </location>
</feature>
<name>ADA_RAT</name>
<accession>Q920P6</accession>
<protein>
    <recommendedName>
        <fullName>Adenosine deaminase</fullName>
        <ecNumber evidence="5">3.5.4.4</ecNumber>
    </recommendedName>
    <alternativeName>
        <fullName>Adenosine aminohydrolase</fullName>
    </alternativeName>
</protein>